<protein>
    <recommendedName>
        <fullName evidence="1">Small ribosomal subunit protein uS15</fullName>
    </recommendedName>
    <alternativeName>
        <fullName evidence="3">30S ribosomal protein S15</fullName>
    </alternativeName>
</protein>
<gene>
    <name evidence="1" type="primary">rpsO</name>
    <name type="ordered locus">jk1135</name>
</gene>
<sequence length="89" mass="10454">MALSKEQKTETLKEFGLHETDTGSPEAQIALLTVRIRQLTEHLKYHKHDHHSRRGLLLLVGRRKGLLKYLAENNVDRYRSLIERLGLRR</sequence>
<reference key="1">
    <citation type="journal article" date="2005" name="J. Bacteriol.">
        <title>Complete genome sequence and analysis of the multiresistant nosocomial pathogen Corynebacterium jeikeium K411, a lipid-requiring bacterium of the human skin flora.</title>
        <authorList>
            <person name="Tauch A."/>
            <person name="Kaiser O."/>
            <person name="Hain T."/>
            <person name="Goesmann A."/>
            <person name="Weisshaar B."/>
            <person name="Albersmeier A."/>
            <person name="Bekel T."/>
            <person name="Bischoff N."/>
            <person name="Brune I."/>
            <person name="Chakraborty T."/>
            <person name="Kalinowski J."/>
            <person name="Meyer F."/>
            <person name="Rupp O."/>
            <person name="Schneiker S."/>
            <person name="Viehoever P."/>
            <person name="Puehler A."/>
        </authorList>
    </citation>
    <scope>NUCLEOTIDE SEQUENCE [LARGE SCALE GENOMIC DNA]</scope>
    <source>
        <strain>K411</strain>
    </source>
</reference>
<organism>
    <name type="scientific">Corynebacterium jeikeium (strain K411)</name>
    <dbReference type="NCBI Taxonomy" id="306537"/>
    <lineage>
        <taxon>Bacteria</taxon>
        <taxon>Bacillati</taxon>
        <taxon>Actinomycetota</taxon>
        <taxon>Actinomycetes</taxon>
        <taxon>Mycobacteriales</taxon>
        <taxon>Corynebacteriaceae</taxon>
        <taxon>Corynebacterium</taxon>
    </lineage>
</organism>
<accession>Q4JV58</accession>
<name>RS15_CORJK</name>
<comment type="function">
    <text evidence="1">One of the primary rRNA binding proteins, it binds directly to 16S rRNA where it helps nucleate assembly of the platform of the 30S subunit by binding and bridging several RNA helices of the 16S rRNA.</text>
</comment>
<comment type="function">
    <text evidence="1">Forms an intersubunit bridge (bridge B4) with the 23S rRNA of the 50S subunit in the ribosome.</text>
</comment>
<comment type="subunit">
    <text evidence="1">Part of the 30S ribosomal subunit. Forms a bridge to the 50S subunit in the 70S ribosome, contacting the 23S rRNA.</text>
</comment>
<comment type="similarity">
    <text evidence="1">Belongs to the universal ribosomal protein uS15 family.</text>
</comment>
<feature type="chain" id="PRO_0000115424" description="Small ribosomal subunit protein uS15">
    <location>
        <begin position="1"/>
        <end position="89"/>
    </location>
</feature>
<feature type="region of interest" description="Disordered" evidence="2">
    <location>
        <begin position="1"/>
        <end position="22"/>
    </location>
</feature>
<feature type="compositionally biased region" description="Basic and acidic residues" evidence="2">
    <location>
        <begin position="1"/>
        <end position="21"/>
    </location>
</feature>
<keyword id="KW-1185">Reference proteome</keyword>
<keyword id="KW-0687">Ribonucleoprotein</keyword>
<keyword id="KW-0689">Ribosomal protein</keyword>
<keyword id="KW-0694">RNA-binding</keyword>
<keyword id="KW-0699">rRNA-binding</keyword>
<dbReference type="EMBL" id="CR931997">
    <property type="protein sequence ID" value="CAI37299.1"/>
    <property type="molecule type" value="Genomic_DNA"/>
</dbReference>
<dbReference type="RefSeq" id="WP_005295163.1">
    <property type="nucleotide sequence ID" value="NC_007164.1"/>
</dbReference>
<dbReference type="SMR" id="Q4JV58"/>
<dbReference type="STRING" id="306537.jk1135"/>
<dbReference type="GeneID" id="92738654"/>
<dbReference type="KEGG" id="cjk:jk1135"/>
<dbReference type="eggNOG" id="COG0184">
    <property type="taxonomic scope" value="Bacteria"/>
</dbReference>
<dbReference type="HOGENOM" id="CLU_148518_0_0_11"/>
<dbReference type="OrthoDB" id="9799262at2"/>
<dbReference type="Proteomes" id="UP000000545">
    <property type="component" value="Chromosome"/>
</dbReference>
<dbReference type="GO" id="GO:0022627">
    <property type="term" value="C:cytosolic small ribosomal subunit"/>
    <property type="evidence" value="ECO:0007669"/>
    <property type="project" value="TreeGrafter"/>
</dbReference>
<dbReference type="GO" id="GO:0019843">
    <property type="term" value="F:rRNA binding"/>
    <property type="evidence" value="ECO:0007669"/>
    <property type="project" value="UniProtKB-UniRule"/>
</dbReference>
<dbReference type="GO" id="GO:0003735">
    <property type="term" value="F:structural constituent of ribosome"/>
    <property type="evidence" value="ECO:0007669"/>
    <property type="project" value="InterPro"/>
</dbReference>
<dbReference type="GO" id="GO:0006412">
    <property type="term" value="P:translation"/>
    <property type="evidence" value="ECO:0007669"/>
    <property type="project" value="UniProtKB-UniRule"/>
</dbReference>
<dbReference type="CDD" id="cd00353">
    <property type="entry name" value="Ribosomal_S15p_S13e"/>
    <property type="match status" value="1"/>
</dbReference>
<dbReference type="FunFam" id="1.10.287.10:FF:000002">
    <property type="entry name" value="30S ribosomal protein S15"/>
    <property type="match status" value="1"/>
</dbReference>
<dbReference type="Gene3D" id="6.10.250.3130">
    <property type="match status" value="1"/>
</dbReference>
<dbReference type="Gene3D" id="1.10.287.10">
    <property type="entry name" value="S15/NS1, RNA-binding"/>
    <property type="match status" value="1"/>
</dbReference>
<dbReference type="HAMAP" id="MF_01343_B">
    <property type="entry name" value="Ribosomal_uS15_B"/>
    <property type="match status" value="1"/>
</dbReference>
<dbReference type="InterPro" id="IPR000589">
    <property type="entry name" value="Ribosomal_uS15"/>
</dbReference>
<dbReference type="InterPro" id="IPR005290">
    <property type="entry name" value="Ribosomal_uS15_bac-type"/>
</dbReference>
<dbReference type="InterPro" id="IPR009068">
    <property type="entry name" value="uS15_NS1_RNA-bd_sf"/>
</dbReference>
<dbReference type="NCBIfam" id="TIGR00952">
    <property type="entry name" value="S15_bact"/>
    <property type="match status" value="1"/>
</dbReference>
<dbReference type="PANTHER" id="PTHR23321">
    <property type="entry name" value="RIBOSOMAL PROTEIN S15, BACTERIAL AND ORGANELLAR"/>
    <property type="match status" value="1"/>
</dbReference>
<dbReference type="PANTHER" id="PTHR23321:SF26">
    <property type="entry name" value="SMALL RIBOSOMAL SUBUNIT PROTEIN US15M"/>
    <property type="match status" value="1"/>
</dbReference>
<dbReference type="Pfam" id="PF00312">
    <property type="entry name" value="Ribosomal_S15"/>
    <property type="match status" value="1"/>
</dbReference>
<dbReference type="SMART" id="SM01387">
    <property type="entry name" value="Ribosomal_S15"/>
    <property type="match status" value="1"/>
</dbReference>
<dbReference type="SUPFAM" id="SSF47060">
    <property type="entry name" value="S15/NS1 RNA-binding domain"/>
    <property type="match status" value="1"/>
</dbReference>
<dbReference type="PROSITE" id="PS00362">
    <property type="entry name" value="RIBOSOMAL_S15"/>
    <property type="match status" value="1"/>
</dbReference>
<proteinExistence type="inferred from homology"/>
<evidence type="ECO:0000255" key="1">
    <source>
        <dbReference type="HAMAP-Rule" id="MF_01343"/>
    </source>
</evidence>
<evidence type="ECO:0000256" key="2">
    <source>
        <dbReference type="SAM" id="MobiDB-lite"/>
    </source>
</evidence>
<evidence type="ECO:0000305" key="3"/>